<gene>
    <name type="primary">NOP9</name>
    <name type="ordered locus">ZYRO0A10648g</name>
</gene>
<dbReference type="EMBL" id="CU928173">
    <property type="protein sequence ID" value="CAR25898.1"/>
    <property type="molecule type" value="Genomic_DNA"/>
</dbReference>
<dbReference type="RefSeq" id="XP_002494831.1">
    <property type="nucleotide sequence ID" value="XM_002494786.1"/>
</dbReference>
<dbReference type="SMR" id="C5DQD7"/>
<dbReference type="FunCoup" id="C5DQD7">
    <property type="interactions" value="990"/>
</dbReference>
<dbReference type="STRING" id="559307.C5DQD7"/>
<dbReference type="GeneID" id="8201794"/>
<dbReference type="KEGG" id="zro:ZYRO0A10648g"/>
<dbReference type="HOGENOM" id="CLU_008720_1_1_1"/>
<dbReference type="InParanoid" id="C5DQD7"/>
<dbReference type="Proteomes" id="UP000008536">
    <property type="component" value="Chromosome A"/>
</dbReference>
<dbReference type="GO" id="GO:0030686">
    <property type="term" value="C:90S preribosome"/>
    <property type="evidence" value="ECO:0007669"/>
    <property type="project" value="TreeGrafter"/>
</dbReference>
<dbReference type="GO" id="GO:0005730">
    <property type="term" value="C:nucleolus"/>
    <property type="evidence" value="ECO:0007669"/>
    <property type="project" value="UniProtKB-SubCell"/>
</dbReference>
<dbReference type="GO" id="GO:0030688">
    <property type="term" value="C:preribosome, small subunit precursor"/>
    <property type="evidence" value="ECO:0007669"/>
    <property type="project" value="TreeGrafter"/>
</dbReference>
<dbReference type="GO" id="GO:0003723">
    <property type="term" value="F:RNA binding"/>
    <property type="evidence" value="ECO:0007669"/>
    <property type="project" value="InterPro"/>
</dbReference>
<dbReference type="GO" id="GO:0000480">
    <property type="term" value="P:endonucleolytic cleavage in 5'-ETS of tricistronic rRNA transcript (SSU-rRNA, 5.8S rRNA, LSU-rRNA)"/>
    <property type="evidence" value="ECO:0007669"/>
    <property type="project" value="TreeGrafter"/>
</dbReference>
<dbReference type="GO" id="GO:0000447">
    <property type="term" value="P:endonucleolytic cleavage in ITS1 to separate SSU-rRNA from 5.8S rRNA and LSU-rRNA from tricistronic rRNA transcript (SSU-rRNA, 5.8S rRNA, LSU-rRNA)"/>
    <property type="evidence" value="ECO:0007669"/>
    <property type="project" value="TreeGrafter"/>
</dbReference>
<dbReference type="GO" id="GO:0000472">
    <property type="term" value="P:endonucleolytic cleavage to generate mature 5'-end of SSU-rRNA from (SSU-rRNA, 5.8S rRNA, LSU-rRNA)"/>
    <property type="evidence" value="ECO:0007669"/>
    <property type="project" value="TreeGrafter"/>
</dbReference>
<dbReference type="GO" id="GO:0000056">
    <property type="term" value="P:ribosomal small subunit export from nucleus"/>
    <property type="evidence" value="ECO:0007669"/>
    <property type="project" value="TreeGrafter"/>
</dbReference>
<dbReference type="Gene3D" id="1.25.10.10">
    <property type="entry name" value="Leucine-rich Repeat Variant"/>
    <property type="match status" value="3"/>
</dbReference>
<dbReference type="InterPro" id="IPR011989">
    <property type="entry name" value="ARM-like"/>
</dbReference>
<dbReference type="InterPro" id="IPR016024">
    <property type="entry name" value="ARM-type_fold"/>
</dbReference>
<dbReference type="InterPro" id="IPR040000">
    <property type="entry name" value="NOP9"/>
</dbReference>
<dbReference type="InterPro" id="IPR001313">
    <property type="entry name" value="Pumilio_RNA-bd_rpt"/>
</dbReference>
<dbReference type="PANTHER" id="PTHR13102">
    <property type="entry name" value="NUCLEOLAR PROTEIN 9"/>
    <property type="match status" value="1"/>
</dbReference>
<dbReference type="PANTHER" id="PTHR13102:SF0">
    <property type="entry name" value="NUCLEOLAR PROTEIN 9"/>
    <property type="match status" value="1"/>
</dbReference>
<dbReference type="Pfam" id="PF22493">
    <property type="entry name" value="PUF_NOP9"/>
    <property type="match status" value="1"/>
</dbReference>
<dbReference type="SMART" id="SM00025">
    <property type="entry name" value="Pumilio"/>
    <property type="match status" value="8"/>
</dbReference>
<dbReference type="SUPFAM" id="SSF48371">
    <property type="entry name" value="ARM repeat"/>
    <property type="match status" value="1"/>
</dbReference>
<proteinExistence type="inferred from homology"/>
<protein>
    <recommendedName>
        <fullName>Nucleolar protein 9</fullName>
    </recommendedName>
    <alternativeName>
        <fullName>Pumilio domain-containing protein NOP9</fullName>
    </alternativeName>
</protein>
<organism>
    <name type="scientific">Zygosaccharomyces rouxii (strain ATCC 2623 / CBS 732 / NBRC 1130 / NCYC 568 / NRRL Y-229)</name>
    <dbReference type="NCBI Taxonomy" id="559307"/>
    <lineage>
        <taxon>Eukaryota</taxon>
        <taxon>Fungi</taxon>
        <taxon>Dikarya</taxon>
        <taxon>Ascomycota</taxon>
        <taxon>Saccharomycotina</taxon>
        <taxon>Saccharomycetes</taxon>
        <taxon>Saccharomycetales</taxon>
        <taxon>Saccharomycetaceae</taxon>
        <taxon>Zygosaccharomyces</taxon>
    </lineage>
</organism>
<reference key="1">
    <citation type="journal article" date="2009" name="Genome Res.">
        <title>Comparative genomics of protoploid Saccharomycetaceae.</title>
        <authorList>
            <consortium name="The Genolevures Consortium"/>
            <person name="Souciet J.-L."/>
            <person name="Dujon B."/>
            <person name="Gaillardin C."/>
            <person name="Johnston M."/>
            <person name="Baret P.V."/>
            <person name="Cliften P."/>
            <person name="Sherman D.J."/>
            <person name="Weissenbach J."/>
            <person name="Westhof E."/>
            <person name="Wincker P."/>
            <person name="Jubin C."/>
            <person name="Poulain J."/>
            <person name="Barbe V."/>
            <person name="Segurens B."/>
            <person name="Artiguenave F."/>
            <person name="Anthouard V."/>
            <person name="Vacherie B."/>
            <person name="Val M.-E."/>
            <person name="Fulton R.S."/>
            <person name="Minx P."/>
            <person name="Wilson R."/>
            <person name="Durrens P."/>
            <person name="Jean G."/>
            <person name="Marck C."/>
            <person name="Martin T."/>
            <person name="Nikolski M."/>
            <person name="Rolland T."/>
            <person name="Seret M.-L."/>
            <person name="Casaregola S."/>
            <person name="Despons L."/>
            <person name="Fairhead C."/>
            <person name="Fischer G."/>
            <person name="Lafontaine I."/>
            <person name="Leh V."/>
            <person name="Lemaire M."/>
            <person name="de Montigny J."/>
            <person name="Neuveglise C."/>
            <person name="Thierry A."/>
            <person name="Blanc-Lenfle I."/>
            <person name="Bleykasten C."/>
            <person name="Diffels J."/>
            <person name="Fritsch E."/>
            <person name="Frangeul L."/>
            <person name="Goeffon A."/>
            <person name="Jauniaux N."/>
            <person name="Kachouri-Lafond R."/>
            <person name="Payen C."/>
            <person name="Potier S."/>
            <person name="Pribylova L."/>
            <person name="Ozanne C."/>
            <person name="Richard G.-F."/>
            <person name="Sacerdot C."/>
            <person name="Straub M.-L."/>
            <person name="Talla E."/>
        </authorList>
    </citation>
    <scope>NUCLEOTIDE SEQUENCE [LARGE SCALE GENOMIC DNA]</scope>
    <source>
        <strain>ATCC 2623 / CBS 732 / BCRC 21506 / NBRC 1130 / NCYC 568 / NRRL Y-229</strain>
    </source>
</reference>
<accession>C5DQD7</accession>
<keyword id="KW-0539">Nucleus</keyword>
<keyword id="KW-1185">Reference proteome</keyword>
<keyword id="KW-0677">Repeat</keyword>
<keyword id="KW-0690">Ribosome biogenesis</keyword>
<keyword id="KW-0698">rRNA processing</keyword>
<comment type="function">
    <text evidence="1">RNA-binding nucleolar protein required for pre-rRNA processing. Involved in production of 18S rRNA and assembly of small ribosomal subunit (By similarity).</text>
</comment>
<comment type="subcellular location">
    <subcellularLocation>
        <location evidence="1">Nucleus</location>
        <location evidence="1">Nucleolus</location>
    </subcellularLocation>
</comment>
<comment type="similarity">
    <text evidence="3">Belongs to the NOP9 family.</text>
</comment>
<name>NOP9_ZYGRC</name>
<feature type="chain" id="PRO_0000407842" description="Nucleolar protein 9">
    <location>
        <begin position="1"/>
        <end position="656"/>
    </location>
</feature>
<feature type="repeat" description="Pumilio 1">
    <location>
        <begin position="86"/>
        <end position="121"/>
    </location>
</feature>
<feature type="repeat" description="Pumilio 2">
    <location>
        <begin position="122"/>
        <end position="157"/>
    </location>
</feature>
<feature type="repeat" description="Pumilio 3">
    <location>
        <begin position="182"/>
        <end position="217"/>
    </location>
</feature>
<feature type="repeat" description="Pumilio 4">
    <location>
        <begin position="280"/>
        <end position="320"/>
    </location>
</feature>
<feature type="repeat" description="Pumilio 5">
    <location>
        <begin position="328"/>
        <end position="363"/>
    </location>
</feature>
<feature type="repeat" description="Pumilio 6">
    <location>
        <begin position="364"/>
        <end position="401"/>
    </location>
</feature>
<feature type="repeat" description="Pumilio 7">
    <location>
        <begin position="505"/>
        <end position="542"/>
    </location>
</feature>
<feature type="repeat" description="Pumilio 8">
    <location>
        <begin position="543"/>
        <end position="581"/>
    </location>
</feature>
<feature type="region of interest" description="Disordered" evidence="2">
    <location>
        <begin position="1"/>
        <end position="42"/>
    </location>
</feature>
<feature type="region of interest" description="Disordered" evidence="2">
    <location>
        <begin position="629"/>
        <end position="656"/>
    </location>
</feature>
<feature type="compositionally biased region" description="Basic residues" evidence="2">
    <location>
        <begin position="1"/>
        <end position="10"/>
    </location>
</feature>
<feature type="compositionally biased region" description="Basic and acidic residues" evidence="2">
    <location>
        <begin position="11"/>
        <end position="25"/>
    </location>
</feature>
<feature type="compositionally biased region" description="Polar residues" evidence="2">
    <location>
        <begin position="33"/>
        <end position="42"/>
    </location>
</feature>
<sequence length="656" mass="76057">MGKPRGRKLLKQQEKDQFKPAKEFDVPDEQDNFDGSNGTDSDPQMFFGVLDREELEYFKHAEATLSMDAFDNAEEKKQFVTNVIEETRGKELKLVISQICSKLMERLILDCDDQQLKSIFKAFNGVFYNLSCHKYASHVLETLLVRGAALVEKELLTPSFDGETDEESFITMENVYLYMLNEVKPHLKAMINHRYASHVLRLLILILASKNLPKTTQNNSTLRSKKSKIARKMIDIKDNDDFDRVHQTPESFKLELKDFLKNLYAGFTNGAASRSDISPTYVTKFRELCVDPVASPVIQLIIQVEGIFDRERSFWRLVFNTTDETDAKEEAFLEYLLSDPVGSHFLENVISFARTKFVERLYNLYMKPKITKLAQRDTTGAFVVQALLRHLKDKEVKEILEELVPQLSMLLNSNIDFGTSIIEASIKEDNYLRDEVINQLLVKYYPEQNENRNILESCLLLSSSTLGNTRDDWPTAEERRRSLFLEQLIGYDSKFVDVTIESMLKLPEERFLQMAYHGVFSHVVEHVLKPTIVDAIKRKLLLNVLCKDVVNMSCNAYGSHIVDKLWEFTAKLTLYKERIANSLLKESDKVKNSSYGKRVWRNWHLDQYVRKPMDWRRIVKEQDVAIFPNAQPLQPKNPLKRPKHTDLPPSKRKGVK</sequence>
<evidence type="ECO:0000250" key="1"/>
<evidence type="ECO:0000256" key="2">
    <source>
        <dbReference type="SAM" id="MobiDB-lite"/>
    </source>
</evidence>
<evidence type="ECO:0000305" key="3"/>